<reference key="1">
    <citation type="journal article" date="2005" name="Nat. Biotechnol.">
        <title>Complete genome sequence of the plant commensal Pseudomonas fluorescens Pf-5.</title>
        <authorList>
            <person name="Paulsen I.T."/>
            <person name="Press C.M."/>
            <person name="Ravel J."/>
            <person name="Kobayashi D.Y."/>
            <person name="Myers G.S.A."/>
            <person name="Mavrodi D.V."/>
            <person name="DeBoy R.T."/>
            <person name="Seshadri R."/>
            <person name="Ren Q."/>
            <person name="Madupu R."/>
            <person name="Dodson R.J."/>
            <person name="Durkin A.S."/>
            <person name="Brinkac L.M."/>
            <person name="Daugherty S.C."/>
            <person name="Sullivan S.A."/>
            <person name="Rosovitz M.J."/>
            <person name="Gwinn M.L."/>
            <person name="Zhou L."/>
            <person name="Schneider D.J."/>
            <person name="Cartinhour S.W."/>
            <person name="Nelson W.C."/>
            <person name="Weidman J."/>
            <person name="Watkins K."/>
            <person name="Tran K."/>
            <person name="Khouri H."/>
            <person name="Pierson E.A."/>
            <person name="Pierson L.S. III"/>
            <person name="Thomashow L.S."/>
            <person name="Loper J.E."/>
        </authorList>
    </citation>
    <scope>NUCLEOTIDE SEQUENCE [LARGE SCALE GENOMIC DNA]</scope>
    <source>
        <strain>ATCC BAA-477 / NRRL B-23932 / Pf-5</strain>
    </source>
</reference>
<organism>
    <name type="scientific">Pseudomonas fluorescens (strain ATCC BAA-477 / NRRL B-23932 / Pf-5)</name>
    <dbReference type="NCBI Taxonomy" id="220664"/>
    <lineage>
        <taxon>Bacteria</taxon>
        <taxon>Pseudomonadati</taxon>
        <taxon>Pseudomonadota</taxon>
        <taxon>Gammaproteobacteria</taxon>
        <taxon>Pseudomonadales</taxon>
        <taxon>Pseudomonadaceae</taxon>
        <taxon>Pseudomonas</taxon>
    </lineage>
</organism>
<comment type="function">
    <text evidence="1">Functions in the N-end rule pathway of protein degradation where it conjugates Leu, Phe and, less efficiently, Met from aminoacyl-tRNAs to the N-termini of proteins containing an N-terminal arginine or lysine.</text>
</comment>
<comment type="catalytic activity">
    <reaction evidence="1">
        <text>N-terminal L-lysyl-[protein] + L-leucyl-tRNA(Leu) = N-terminal L-leucyl-L-lysyl-[protein] + tRNA(Leu) + H(+)</text>
        <dbReference type="Rhea" id="RHEA:12340"/>
        <dbReference type="Rhea" id="RHEA-COMP:9613"/>
        <dbReference type="Rhea" id="RHEA-COMP:9622"/>
        <dbReference type="Rhea" id="RHEA-COMP:12670"/>
        <dbReference type="Rhea" id="RHEA-COMP:12671"/>
        <dbReference type="ChEBI" id="CHEBI:15378"/>
        <dbReference type="ChEBI" id="CHEBI:65249"/>
        <dbReference type="ChEBI" id="CHEBI:78442"/>
        <dbReference type="ChEBI" id="CHEBI:78494"/>
        <dbReference type="ChEBI" id="CHEBI:133043"/>
        <dbReference type="EC" id="2.3.2.6"/>
    </reaction>
</comment>
<comment type="catalytic activity">
    <reaction evidence="1">
        <text>N-terminal L-arginyl-[protein] + L-leucyl-tRNA(Leu) = N-terminal L-leucyl-L-arginyl-[protein] + tRNA(Leu) + H(+)</text>
        <dbReference type="Rhea" id="RHEA:50416"/>
        <dbReference type="Rhea" id="RHEA-COMP:9613"/>
        <dbReference type="Rhea" id="RHEA-COMP:9622"/>
        <dbReference type="Rhea" id="RHEA-COMP:12672"/>
        <dbReference type="Rhea" id="RHEA-COMP:12673"/>
        <dbReference type="ChEBI" id="CHEBI:15378"/>
        <dbReference type="ChEBI" id="CHEBI:64719"/>
        <dbReference type="ChEBI" id="CHEBI:78442"/>
        <dbReference type="ChEBI" id="CHEBI:78494"/>
        <dbReference type="ChEBI" id="CHEBI:133044"/>
        <dbReference type="EC" id="2.3.2.6"/>
    </reaction>
</comment>
<comment type="catalytic activity">
    <reaction evidence="1">
        <text>L-phenylalanyl-tRNA(Phe) + an N-terminal L-alpha-aminoacyl-[protein] = an N-terminal L-phenylalanyl-L-alpha-aminoacyl-[protein] + tRNA(Phe)</text>
        <dbReference type="Rhea" id="RHEA:43632"/>
        <dbReference type="Rhea" id="RHEA-COMP:9668"/>
        <dbReference type="Rhea" id="RHEA-COMP:9699"/>
        <dbReference type="Rhea" id="RHEA-COMP:10636"/>
        <dbReference type="Rhea" id="RHEA-COMP:10637"/>
        <dbReference type="ChEBI" id="CHEBI:78442"/>
        <dbReference type="ChEBI" id="CHEBI:78531"/>
        <dbReference type="ChEBI" id="CHEBI:78597"/>
        <dbReference type="ChEBI" id="CHEBI:83561"/>
        <dbReference type="EC" id="2.3.2.6"/>
    </reaction>
</comment>
<comment type="subcellular location">
    <subcellularLocation>
        <location evidence="1">Cytoplasm</location>
    </subcellularLocation>
</comment>
<comment type="similarity">
    <text evidence="1">Belongs to the L/F-transferase family.</text>
</comment>
<feature type="chain" id="PRO_0000258077" description="Leucyl/phenylalanyl-tRNA--protein transferase">
    <location>
        <begin position="1"/>
        <end position="226"/>
    </location>
</feature>
<name>LFTR_PSEF5</name>
<protein>
    <recommendedName>
        <fullName evidence="1">Leucyl/phenylalanyl-tRNA--protein transferase</fullName>
        <ecNumber evidence="1">2.3.2.6</ecNumber>
    </recommendedName>
    <alternativeName>
        <fullName evidence="1">L/F-transferase</fullName>
    </alternativeName>
    <alternativeName>
        <fullName evidence="1">Leucyltransferase</fullName>
    </alternativeName>
    <alternativeName>
        <fullName evidence="1">Phenyalanyltransferase</fullName>
    </alternativeName>
</protein>
<proteinExistence type="inferred from homology"/>
<evidence type="ECO:0000255" key="1">
    <source>
        <dbReference type="HAMAP-Rule" id="MF_00688"/>
    </source>
</evidence>
<dbReference type="EC" id="2.3.2.6" evidence="1"/>
<dbReference type="EMBL" id="CP000076">
    <property type="protein sequence ID" value="AAY93146.2"/>
    <property type="molecule type" value="Genomic_DNA"/>
</dbReference>
<dbReference type="RefSeq" id="WP_011062170.1">
    <property type="nucleotide sequence ID" value="NC_004129.6"/>
</dbReference>
<dbReference type="SMR" id="Q4K9V1"/>
<dbReference type="STRING" id="220664.PFL_3882"/>
<dbReference type="KEGG" id="pfl:PFL_3882"/>
<dbReference type="PATRIC" id="fig|220664.5.peg.3977"/>
<dbReference type="eggNOG" id="COG2360">
    <property type="taxonomic scope" value="Bacteria"/>
</dbReference>
<dbReference type="HOGENOM" id="CLU_075045_0_0_6"/>
<dbReference type="Proteomes" id="UP000008540">
    <property type="component" value="Chromosome"/>
</dbReference>
<dbReference type="GO" id="GO:0005737">
    <property type="term" value="C:cytoplasm"/>
    <property type="evidence" value="ECO:0007669"/>
    <property type="project" value="UniProtKB-SubCell"/>
</dbReference>
<dbReference type="GO" id="GO:0008914">
    <property type="term" value="F:leucyl-tRNA--protein transferase activity"/>
    <property type="evidence" value="ECO:0007669"/>
    <property type="project" value="UniProtKB-UniRule"/>
</dbReference>
<dbReference type="GO" id="GO:0030163">
    <property type="term" value="P:protein catabolic process"/>
    <property type="evidence" value="ECO:0007669"/>
    <property type="project" value="UniProtKB-UniRule"/>
</dbReference>
<dbReference type="FunFam" id="3.30.70.3550:FF:000001">
    <property type="entry name" value="Leucyl/phenylalanyl-tRNA--protein transferase"/>
    <property type="match status" value="1"/>
</dbReference>
<dbReference type="FunFam" id="3.40.630.70:FF:000001">
    <property type="entry name" value="Leucyl/phenylalanyl-tRNA--protein transferase"/>
    <property type="match status" value="1"/>
</dbReference>
<dbReference type="Gene3D" id="3.40.630.70">
    <property type="entry name" value="Leucyl/phenylalanyl-tRNA-protein transferase, C-terminal domain"/>
    <property type="match status" value="1"/>
</dbReference>
<dbReference type="Gene3D" id="3.30.70.3550">
    <property type="entry name" value="Leucyl/phenylalanyl-tRNA-protein transferase, N-terminal domain"/>
    <property type="match status" value="1"/>
</dbReference>
<dbReference type="HAMAP" id="MF_00688">
    <property type="entry name" value="Leu_Phe_trans"/>
    <property type="match status" value="1"/>
</dbReference>
<dbReference type="InterPro" id="IPR016181">
    <property type="entry name" value="Acyl_CoA_acyltransferase"/>
</dbReference>
<dbReference type="InterPro" id="IPR004616">
    <property type="entry name" value="Leu/Phe-tRNA_Trfase"/>
</dbReference>
<dbReference type="InterPro" id="IPR042203">
    <property type="entry name" value="Leu/Phe-tRNA_Trfase_C"/>
</dbReference>
<dbReference type="InterPro" id="IPR042221">
    <property type="entry name" value="Leu/Phe-tRNA_Trfase_N"/>
</dbReference>
<dbReference type="NCBIfam" id="TIGR00667">
    <property type="entry name" value="aat"/>
    <property type="match status" value="1"/>
</dbReference>
<dbReference type="PANTHER" id="PTHR30098">
    <property type="entry name" value="LEUCYL/PHENYLALANYL-TRNA--PROTEIN TRANSFERASE"/>
    <property type="match status" value="1"/>
</dbReference>
<dbReference type="PANTHER" id="PTHR30098:SF2">
    <property type="entry name" value="LEUCYL_PHENYLALANYL-TRNA--PROTEIN TRANSFERASE"/>
    <property type="match status" value="1"/>
</dbReference>
<dbReference type="Pfam" id="PF03588">
    <property type="entry name" value="Leu_Phe_trans"/>
    <property type="match status" value="1"/>
</dbReference>
<dbReference type="SUPFAM" id="SSF55729">
    <property type="entry name" value="Acyl-CoA N-acyltransferases (Nat)"/>
    <property type="match status" value="1"/>
</dbReference>
<sequence>MLTWLQRNTLDFPPLEKAMREPNGLLAAGGDLSADRLIQAYRHGCFPWFSEGQPILWWSPDPRTVLFPDELHVSRSLGKLLRKQHYQVTFDRDFAAVISACAAPRAYADGTWISEAMQRAYLQLHQRGYAHSVEVWDQGVLVGGLYGLAMGQLFFGESMFSRADNASKFGFATLVERLKAWGFVLIDCQMPTEHLHSLGARSISRPEFANYLKHHLDLPSRAIWVS</sequence>
<keyword id="KW-0012">Acyltransferase</keyword>
<keyword id="KW-0963">Cytoplasm</keyword>
<keyword id="KW-0808">Transferase</keyword>
<gene>
    <name evidence="1" type="primary">aat</name>
    <name type="ordered locus">PFL_3882</name>
</gene>
<accession>Q4K9V1</accession>